<gene>
    <name type="primary">MT-CYB</name>
    <name type="synonym">COB</name>
    <name type="synonym">CYTB</name>
    <name type="synonym">MTCYB</name>
</gene>
<reference key="1">
    <citation type="submission" date="1993-02" db="EMBL/GenBank/DDBJ databases">
        <authorList>
            <person name="Chikuni K."/>
        </authorList>
    </citation>
    <scope>NUCLEOTIDE SEQUENCE [GENOMIC DNA]</scope>
    <source>
        <tissue>Muscle</tissue>
    </source>
</reference>
<reference key="2">
    <citation type="journal article" date="1995" name="J. Mol. Evol.">
        <title>Molecular phylogeny based on the kappa-casein and cytochrome b sequences in the mammalian suborder ruminantia.</title>
        <authorList>
            <person name="Chikuni K."/>
            <person name="Mori Y."/>
            <person name="Tabata T."/>
            <person name="Saito M."/>
            <person name="Monma M."/>
            <person name="Kosugiyama M."/>
        </authorList>
    </citation>
    <scope>NUCLEOTIDE SEQUENCE [GENOMIC DNA] OF 53-267</scope>
    <source>
        <tissue>Muscle</tissue>
    </source>
</reference>
<keyword id="KW-0249">Electron transport</keyword>
<keyword id="KW-0349">Heme</keyword>
<keyword id="KW-0408">Iron</keyword>
<keyword id="KW-0472">Membrane</keyword>
<keyword id="KW-0479">Metal-binding</keyword>
<keyword id="KW-0496">Mitochondrion</keyword>
<keyword id="KW-0999">Mitochondrion inner membrane</keyword>
<keyword id="KW-0679">Respiratory chain</keyword>
<keyword id="KW-0812">Transmembrane</keyword>
<keyword id="KW-1133">Transmembrane helix</keyword>
<keyword id="KW-0813">Transport</keyword>
<keyword id="KW-0830">Ubiquinone</keyword>
<comment type="function">
    <text evidence="2">Component of the ubiquinol-cytochrome c reductase complex (complex III or cytochrome b-c1 complex) that is part of the mitochondrial respiratory chain. The b-c1 complex mediates electron transfer from ubiquinol to cytochrome c. Contributes to the generation of a proton gradient across the mitochondrial membrane that is then used for ATP synthesis.</text>
</comment>
<comment type="cofactor">
    <cofactor evidence="2">
        <name>heme b</name>
        <dbReference type="ChEBI" id="CHEBI:60344"/>
    </cofactor>
    <text evidence="2">Binds 2 heme b groups non-covalently.</text>
</comment>
<comment type="subunit">
    <text evidence="2">The cytochrome bc1 complex contains 11 subunits: 3 respiratory subunits (MT-CYB, CYC1 and UQCRFS1), 2 core proteins (UQCRC1 and UQCRC2) and 6 low-molecular weight proteins (UQCRH/QCR6, UQCRB/QCR7, UQCRQ/QCR8, UQCR10/QCR9, UQCR11/QCR10 and a cleavage product of UQCRFS1). This cytochrome bc1 complex then forms a dimer.</text>
</comment>
<comment type="subcellular location">
    <subcellularLocation>
        <location evidence="2">Mitochondrion inner membrane</location>
        <topology evidence="2">Multi-pass membrane protein</topology>
    </subcellularLocation>
</comment>
<comment type="miscellaneous">
    <text evidence="1">Heme 1 (or BL or b562) is low-potential and absorbs at about 562 nm, and heme 2 (or BH or b566) is high-potential and absorbs at about 566 nm.</text>
</comment>
<comment type="similarity">
    <text evidence="3 4">Belongs to the cytochrome b family.</text>
</comment>
<comment type="caution">
    <text evidence="2">The full-length protein contains only eight transmembrane helices, not nine as predicted by bioinformatics tools.</text>
</comment>
<organism>
    <name type="scientific">Capricornis crispus</name>
    <name type="common">Japanese serow</name>
    <name type="synonym">Naemorhedus crispus</name>
    <dbReference type="NCBI Taxonomy" id="9966"/>
    <lineage>
        <taxon>Eukaryota</taxon>
        <taxon>Metazoa</taxon>
        <taxon>Chordata</taxon>
        <taxon>Craniata</taxon>
        <taxon>Vertebrata</taxon>
        <taxon>Euteleostomi</taxon>
        <taxon>Mammalia</taxon>
        <taxon>Eutheria</taxon>
        <taxon>Laurasiatheria</taxon>
        <taxon>Artiodactyla</taxon>
        <taxon>Ruminantia</taxon>
        <taxon>Pecora</taxon>
        <taxon>Bovidae</taxon>
        <taxon>Caprinae</taxon>
        <taxon>Capricornis</taxon>
    </lineage>
</organism>
<proteinExistence type="inferred from homology"/>
<protein>
    <recommendedName>
        <fullName>Cytochrome b</fullName>
    </recommendedName>
    <alternativeName>
        <fullName>Complex III subunit 3</fullName>
    </alternativeName>
    <alternativeName>
        <fullName>Complex III subunit III</fullName>
    </alternativeName>
    <alternativeName>
        <fullName>Cytochrome b-c1 complex subunit 3</fullName>
    </alternativeName>
    <alternativeName>
        <fullName>Ubiquinol-cytochrome-c reductase complex cytochrome b subunit</fullName>
    </alternativeName>
</protein>
<evidence type="ECO:0000250" key="1"/>
<evidence type="ECO:0000250" key="2">
    <source>
        <dbReference type="UniProtKB" id="P00157"/>
    </source>
</evidence>
<evidence type="ECO:0000255" key="3">
    <source>
        <dbReference type="PROSITE-ProRule" id="PRU00967"/>
    </source>
</evidence>
<evidence type="ECO:0000255" key="4">
    <source>
        <dbReference type="PROSITE-ProRule" id="PRU00968"/>
    </source>
</evidence>
<accession>Q34045</accession>
<sequence>MINIRKTHPLMKIVNNAFIDLPTPSNISSWWNFGSLLGICLILQILTGLFLAMHYTSDTTTAFSSVTHICRDVNYGWIIRYMHANGASMFFICLFMHVGRGLYYGSYTFLETWNIGVILLLTTMATAFMGYVLPWGQMSFWGATVITNLLSAIPYIGTNLVEWIWGGFSVDKATLTRFFAFHFILPFIITALAMVHLLFLHETGSNNPTGISSDTDKIPFHPYYTIKDILGIVLLILTLMLLVLFTPDLLGDPDNYTPANPLNTPPHIKPEWYFLFAYAILRSIPNKLGGVLALVLSILILALVPFLHTSKQRSMMFRPISQCMFWILVADLLTLTWIGGQPVEHPYIIIGQLASIMYFLIILVLMPVASTIENNLLKW</sequence>
<name>CYB_CAPCR</name>
<dbReference type="EMBL" id="D32191">
    <property type="protein sequence ID" value="BAA06890.1"/>
    <property type="molecule type" value="Genomic_DNA"/>
</dbReference>
<dbReference type="SMR" id="Q34045"/>
<dbReference type="GO" id="GO:0005743">
    <property type="term" value="C:mitochondrial inner membrane"/>
    <property type="evidence" value="ECO:0007669"/>
    <property type="project" value="UniProtKB-SubCell"/>
</dbReference>
<dbReference type="GO" id="GO:0045275">
    <property type="term" value="C:respiratory chain complex III"/>
    <property type="evidence" value="ECO:0007669"/>
    <property type="project" value="InterPro"/>
</dbReference>
<dbReference type="GO" id="GO:0046872">
    <property type="term" value="F:metal ion binding"/>
    <property type="evidence" value="ECO:0007669"/>
    <property type="project" value="UniProtKB-KW"/>
</dbReference>
<dbReference type="GO" id="GO:0008121">
    <property type="term" value="F:ubiquinol-cytochrome-c reductase activity"/>
    <property type="evidence" value="ECO:0007669"/>
    <property type="project" value="InterPro"/>
</dbReference>
<dbReference type="GO" id="GO:0006122">
    <property type="term" value="P:mitochondrial electron transport, ubiquinol to cytochrome c"/>
    <property type="evidence" value="ECO:0007669"/>
    <property type="project" value="TreeGrafter"/>
</dbReference>
<dbReference type="CDD" id="cd00290">
    <property type="entry name" value="cytochrome_b_C"/>
    <property type="match status" value="1"/>
</dbReference>
<dbReference type="CDD" id="cd00284">
    <property type="entry name" value="Cytochrome_b_N"/>
    <property type="match status" value="1"/>
</dbReference>
<dbReference type="FunFam" id="1.20.810.10:FF:000002">
    <property type="entry name" value="Cytochrome b"/>
    <property type="match status" value="1"/>
</dbReference>
<dbReference type="Gene3D" id="1.20.810.10">
    <property type="entry name" value="Cytochrome Bc1 Complex, Chain C"/>
    <property type="match status" value="1"/>
</dbReference>
<dbReference type="InterPro" id="IPR005798">
    <property type="entry name" value="Cyt_b/b6_C"/>
</dbReference>
<dbReference type="InterPro" id="IPR036150">
    <property type="entry name" value="Cyt_b/b6_C_sf"/>
</dbReference>
<dbReference type="InterPro" id="IPR005797">
    <property type="entry name" value="Cyt_b/b6_N"/>
</dbReference>
<dbReference type="InterPro" id="IPR027387">
    <property type="entry name" value="Cytb/b6-like_sf"/>
</dbReference>
<dbReference type="InterPro" id="IPR030689">
    <property type="entry name" value="Cytochrome_b"/>
</dbReference>
<dbReference type="InterPro" id="IPR048260">
    <property type="entry name" value="Cytochrome_b_C_euk/bac"/>
</dbReference>
<dbReference type="InterPro" id="IPR048259">
    <property type="entry name" value="Cytochrome_b_N_euk/bac"/>
</dbReference>
<dbReference type="InterPro" id="IPR016174">
    <property type="entry name" value="Di-haem_cyt_TM"/>
</dbReference>
<dbReference type="PANTHER" id="PTHR19271">
    <property type="entry name" value="CYTOCHROME B"/>
    <property type="match status" value="1"/>
</dbReference>
<dbReference type="PANTHER" id="PTHR19271:SF16">
    <property type="entry name" value="CYTOCHROME B"/>
    <property type="match status" value="1"/>
</dbReference>
<dbReference type="Pfam" id="PF00032">
    <property type="entry name" value="Cytochrom_B_C"/>
    <property type="match status" value="1"/>
</dbReference>
<dbReference type="Pfam" id="PF00033">
    <property type="entry name" value="Cytochrome_B"/>
    <property type="match status" value="1"/>
</dbReference>
<dbReference type="PIRSF" id="PIRSF038885">
    <property type="entry name" value="COB"/>
    <property type="match status" value="1"/>
</dbReference>
<dbReference type="SUPFAM" id="SSF81648">
    <property type="entry name" value="a domain/subunit of cytochrome bc1 complex (Ubiquinol-cytochrome c reductase)"/>
    <property type="match status" value="1"/>
</dbReference>
<dbReference type="SUPFAM" id="SSF81342">
    <property type="entry name" value="Transmembrane di-heme cytochromes"/>
    <property type="match status" value="1"/>
</dbReference>
<dbReference type="PROSITE" id="PS51003">
    <property type="entry name" value="CYTB_CTER"/>
    <property type="match status" value="1"/>
</dbReference>
<dbReference type="PROSITE" id="PS51002">
    <property type="entry name" value="CYTB_NTER"/>
    <property type="match status" value="1"/>
</dbReference>
<geneLocation type="mitochondrion"/>
<feature type="chain" id="PRO_0000060721" description="Cytochrome b">
    <location>
        <begin position="1"/>
        <end position="379"/>
    </location>
</feature>
<feature type="transmembrane region" description="Helical" evidence="2">
    <location>
        <begin position="33"/>
        <end position="53"/>
    </location>
</feature>
<feature type="transmembrane region" description="Helical" evidence="2">
    <location>
        <begin position="77"/>
        <end position="98"/>
    </location>
</feature>
<feature type="transmembrane region" description="Helical" evidence="2">
    <location>
        <begin position="113"/>
        <end position="133"/>
    </location>
</feature>
<feature type="transmembrane region" description="Helical" evidence="2">
    <location>
        <begin position="178"/>
        <end position="198"/>
    </location>
</feature>
<feature type="transmembrane region" description="Helical" evidence="2">
    <location>
        <begin position="226"/>
        <end position="246"/>
    </location>
</feature>
<feature type="transmembrane region" description="Helical" evidence="2">
    <location>
        <begin position="288"/>
        <end position="308"/>
    </location>
</feature>
<feature type="transmembrane region" description="Helical" evidence="2">
    <location>
        <begin position="320"/>
        <end position="340"/>
    </location>
</feature>
<feature type="transmembrane region" description="Helical" evidence="2">
    <location>
        <begin position="347"/>
        <end position="367"/>
    </location>
</feature>
<feature type="binding site" description="axial binding residue" evidence="2">
    <location>
        <position position="83"/>
    </location>
    <ligand>
        <name>heme b</name>
        <dbReference type="ChEBI" id="CHEBI:60344"/>
        <label>b562</label>
    </ligand>
    <ligandPart>
        <name>Fe</name>
        <dbReference type="ChEBI" id="CHEBI:18248"/>
    </ligandPart>
</feature>
<feature type="binding site" description="axial binding residue" evidence="2">
    <location>
        <position position="97"/>
    </location>
    <ligand>
        <name>heme b</name>
        <dbReference type="ChEBI" id="CHEBI:60344"/>
        <label>b566</label>
    </ligand>
    <ligandPart>
        <name>Fe</name>
        <dbReference type="ChEBI" id="CHEBI:18248"/>
    </ligandPart>
</feature>
<feature type="binding site" description="axial binding residue" evidence="2">
    <location>
        <position position="182"/>
    </location>
    <ligand>
        <name>heme b</name>
        <dbReference type="ChEBI" id="CHEBI:60344"/>
        <label>b562</label>
    </ligand>
    <ligandPart>
        <name>Fe</name>
        <dbReference type="ChEBI" id="CHEBI:18248"/>
    </ligandPart>
</feature>
<feature type="binding site" description="axial binding residue" evidence="2">
    <location>
        <position position="196"/>
    </location>
    <ligand>
        <name>heme b</name>
        <dbReference type="ChEBI" id="CHEBI:60344"/>
        <label>b566</label>
    </ligand>
    <ligandPart>
        <name>Fe</name>
        <dbReference type="ChEBI" id="CHEBI:18248"/>
    </ligandPart>
</feature>
<feature type="binding site" evidence="2">
    <location>
        <position position="201"/>
    </location>
    <ligand>
        <name>a ubiquinone</name>
        <dbReference type="ChEBI" id="CHEBI:16389"/>
    </ligand>
</feature>